<organism>
    <name type="scientific">Laribacter hongkongensis (strain HLHK9)</name>
    <dbReference type="NCBI Taxonomy" id="557598"/>
    <lineage>
        <taxon>Bacteria</taxon>
        <taxon>Pseudomonadati</taxon>
        <taxon>Pseudomonadota</taxon>
        <taxon>Betaproteobacteria</taxon>
        <taxon>Neisseriales</taxon>
        <taxon>Aquaspirillaceae</taxon>
        <taxon>Laribacter</taxon>
    </lineage>
</organism>
<sequence>MNPFAPSAPLGGCLSPVIVALDFPTDADTLEFVARLEPSQCRLKVGKELFTASGRKLVDQLVARGFDVFLDLKYHDIPNTVASACRVAADLGVWMVDMHASGGRRMMEAAREAVANCSVRPLLIGVTVLTSMTDEELAELGLPAAAVQVERLARLAQSSGLDGVVCSAQEAAALKNLLGASFKLVTPGIRLADSAADDQRRVMTPAAAMAAGSDYLVIGRPITKAADPLATLTAINAGLAAR</sequence>
<proteinExistence type="inferred from homology"/>
<dbReference type="EC" id="4.1.1.23" evidence="1"/>
<dbReference type="EMBL" id="CP001154">
    <property type="protein sequence ID" value="ACO73866.1"/>
    <property type="molecule type" value="Genomic_DNA"/>
</dbReference>
<dbReference type="RefSeq" id="WP_012696358.1">
    <property type="nucleotide sequence ID" value="NC_012559.1"/>
</dbReference>
<dbReference type="SMR" id="C1D549"/>
<dbReference type="STRING" id="557598.LHK_00873"/>
<dbReference type="KEGG" id="lhk:LHK_00873"/>
<dbReference type="eggNOG" id="COG0284">
    <property type="taxonomic scope" value="Bacteria"/>
</dbReference>
<dbReference type="HOGENOM" id="CLU_067069_0_0_4"/>
<dbReference type="UniPathway" id="UPA00070">
    <property type="reaction ID" value="UER00120"/>
</dbReference>
<dbReference type="Proteomes" id="UP000002010">
    <property type="component" value="Chromosome"/>
</dbReference>
<dbReference type="GO" id="GO:0005829">
    <property type="term" value="C:cytosol"/>
    <property type="evidence" value="ECO:0007669"/>
    <property type="project" value="TreeGrafter"/>
</dbReference>
<dbReference type="GO" id="GO:0004590">
    <property type="term" value="F:orotidine-5'-phosphate decarboxylase activity"/>
    <property type="evidence" value="ECO:0007669"/>
    <property type="project" value="UniProtKB-UniRule"/>
</dbReference>
<dbReference type="GO" id="GO:0006207">
    <property type="term" value="P:'de novo' pyrimidine nucleobase biosynthetic process"/>
    <property type="evidence" value="ECO:0007669"/>
    <property type="project" value="InterPro"/>
</dbReference>
<dbReference type="GO" id="GO:0044205">
    <property type="term" value="P:'de novo' UMP biosynthetic process"/>
    <property type="evidence" value="ECO:0007669"/>
    <property type="project" value="UniProtKB-UniRule"/>
</dbReference>
<dbReference type="CDD" id="cd04725">
    <property type="entry name" value="OMP_decarboxylase_like"/>
    <property type="match status" value="1"/>
</dbReference>
<dbReference type="FunFam" id="3.20.20.70:FF:000015">
    <property type="entry name" value="Orotidine 5'-phosphate decarboxylase"/>
    <property type="match status" value="1"/>
</dbReference>
<dbReference type="Gene3D" id="3.20.20.70">
    <property type="entry name" value="Aldolase class I"/>
    <property type="match status" value="1"/>
</dbReference>
<dbReference type="HAMAP" id="MF_01200_B">
    <property type="entry name" value="OMPdecase_type1_B"/>
    <property type="match status" value="1"/>
</dbReference>
<dbReference type="InterPro" id="IPR013785">
    <property type="entry name" value="Aldolase_TIM"/>
</dbReference>
<dbReference type="InterPro" id="IPR014732">
    <property type="entry name" value="OMPdecase"/>
</dbReference>
<dbReference type="InterPro" id="IPR018089">
    <property type="entry name" value="OMPdecase_AS"/>
</dbReference>
<dbReference type="InterPro" id="IPR047596">
    <property type="entry name" value="OMPdecase_bac"/>
</dbReference>
<dbReference type="InterPro" id="IPR001754">
    <property type="entry name" value="OMPdeCOase_dom"/>
</dbReference>
<dbReference type="InterPro" id="IPR011060">
    <property type="entry name" value="RibuloseP-bd_barrel"/>
</dbReference>
<dbReference type="NCBIfam" id="NF001273">
    <property type="entry name" value="PRK00230.1"/>
    <property type="match status" value="1"/>
</dbReference>
<dbReference type="NCBIfam" id="TIGR01740">
    <property type="entry name" value="pyrF"/>
    <property type="match status" value="1"/>
</dbReference>
<dbReference type="PANTHER" id="PTHR32119">
    <property type="entry name" value="OROTIDINE 5'-PHOSPHATE DECARBOXYLASE"/>
    <property type="match status" value="1"/>
</dbReference>
<dbReference type="PANTHER" id="PTHR32119:SF2">
    <property type="entry name" value="OROTIDINE 5'-PHOSPHATE DECARBOXYLASE"/>
    <property type="match status" value="1"/>
</dbReference>
<dbReference type="Pfam" id="PF00215">
    <property type="entry name" value="OMPdecase"/>
    <property type="match status" value="1"/>
</dbReference>
<dbReference type="SMART" id="SM00934">
    <property type="entry name" value="OMPdecase"/>
    <property type="match status" value="1"/>
</dbReference>
<dbReference type="SUPFAM" id="SSF51366">
    <property type="entry name" value="Ribulose-phoshate binding barrel"/>
    <property type="match status" value="1"/>
</dbReference>
<dbReference type="PROSITE" id="PS00156">
    <property type="entry name" value="OMPDECASE"/>
    <property type="match status" value="1"/>
</dbReference>
<reference key="1">
    <citation type="journal article" date="2009" name="PLoS Genet.">
        <title>The complete genome and proteome of Laribacter hongkongensis reveal potential mechanisms for adaptations to different temperatures and habitats.</title>
        <authorList>
            <person name="Woo P.C.Y."/>
            <person name="Lau S.K.P."/>
            <person name="Tse H."/>
            <person name="Teng J.L.L."/>
            <person name="Curreem S.O."/>
            <person name="Tsang A.K.L."/>
            <person name="Fan R.Y.Y."/>
            <person name="Wong G.K.M."/>
            <person name="Huang Y."/>
            <person name="Loman N.J."/>
            <person name="Snyder L.A.S."/>
            <person name="Cai J.J."/>
            <person name="Huang J.-D."/>
            <person name="Mak W."/>
            <person name="Pallen M.J."/>
            <person name="Lok S."/>
            <person name="Yuen K.-Y."/>
        </authorList>
    </citation>
    <scope>NUCLEOTIDE SEQUENCE [LARGE SCALE GENOMIC DNA]</scope>
    <source>
        <strain>HLHK9</strain>
    </source>
</reference>
<name>PYRF_LARHH</name>
<comment type="function">
    <text evidence="1">Catalyzes the decarboxylation of orotidine 5'-monophosphate (OMP) to uridine 5'-monophosphate (UMP).</text>
</comment>
<comment type="catalytic activity">
    <reaction evidence="1">
        <text>orotidine 5'-phosphate + H(+) = UMP + CO2</text>
        <dbReference type="Rhea" id="RHEA:11596"/>
        <dbReference type="ChEBI" id="CHEBI:15378"/>
        <dbReference type="ChEBI" id="CHEBI:16526"/>
        <dbReference type="ChEBI" id="CHEBI:57538"/>
        <dbReference type="ChEBI" id="CHEBI:57865"/>
        <dbReference type="EC" id="4.1.1.23"/>
    </reaction>
</comment>
<comment type="pathway">
    <text evidence="1">Pyrimidine metabolism; UMP biosynthesis via de novo pathway; UMP from orotate: step 2/2.</text>
</comment>
<comment type="subunit">
    <text evidence="1">Homodimer.</text>
</comment>
<comment type="similarity">
    <text evidence="1">Belongs to the OMP decarboxylase family. Type 1 subfamily.</text>
</comment>
<feature type="chain" id="PRO_1000164573" description="Orotidine 5'-phosphate decarboxylase">
    <location>
        <begin position="1"/>
        <end position="242"/>
    </location>
</feature>
<feature type="active site" description="Proton donor" evidence="1">
    <location>
        <position position="73"/>
    </location>
</feature>
<feature type="binding site" evidence="1">
    <location>
        <position position="22"/>
    </location>
    <ligand>
        <name>substrate</name>
    </ligand>
</feature>
<feature type="binding site" evidence="1">
    <location>
        <position position="44"/>
    </location>
    <ligand>
        <name>substrate</name>
    </ligand>
</feature>
<feature type="binding site" evidence="1">
    <location>
        <begin position="71"/>
        <end position="80"/>
    </location>
    <ligand>
        <name>substrate</name>
    </ligand>
</feature>
<feature type="binding site" evidence="1">
    <location>
        <position position="130"/>
    </location>
    <ligand>
        <name>substrate</name>
    </ligand>
</feature>
<feature type="binding site" evidence="1">
    <location>
        <position position="190"/>
    </location>
    <ligand>
        <name>substrate</name>
    </ligand>
</feature>
<feature type="binding site" evidence="1">
    <location>
        <position position="199"/>
    </location>
    <ligand>
        <name>substrate</name>
    </ligand>
</feature>
<feature type="binding site" evidence="1">
    <location>
        <position position="219"/>
    </location>
    <ligand>
        <name>substrate</name>
    </ligand>
</feature>
<feature type="binding site" evidence="1">
    <location>
        <position position="220"/>
    </location>
    <ligand>
        <name>substrate</name>
    </ligand>
</feature>
<evidence type="ECO:0000255" key="1">
    <source>
        <dbReference type="HAMAP-Rule" id="MF_01200"/>
    </source>
</evidence>
<accession>C1D549</accession>
<keyword id="KW-0210">Decarboxylase</keyword>
<keyword id="KW-0456">Lyase</keyword>
<keyword id="KW-0665">Pyrimidine biosynthesis</keyword>
<keyword id="KW-1185">Reference proteome</keyword>
<gene>
    <name evidence="1" type="primary">pyrF</name>
    <name type="ordered locus">LHK_00873</name>
</gene>
<protein>
    <recommendedName>
        <fullName evidence="1">Orotidine 5'-phosphate decarboxylase</fullName>
        <ecNumber evidence="1">4.1.1.23</ecNumber>
    </recommendedName>
    <alternativeName>
        <fullName evidence="1">OMP decarboxylase</fullName>
        <shortName evidence="1">OMPDCase</shortName>
        <shortName evidence="1">OMPdecase</shortName>
    </alternativeName>
</protein>